<dbReference type="EC" id="2.1.1.163" evidence="1"/>
<dbReference type="EC" id="2.1.1.201" evidence="1"/>
<dbReference type="EMBL" id="CP000675">
    <property type="protein sequence ID" value="ABQ57090.1"/>
    <property type="molecule type" value="Genomic_DNA"/>
</dbReference>
<dbReference type="RefSeq" id="WP_011947793.1">
    <property type="nucleotide sequence ID" value="NC_009494.2"/>
</dbReference>
<dbReference type="SMR" id="A5II90"/>
<dbReference type="KEGG" id="lpc:LPC_3203"/>
<dbReference type="HOGENOM" id="CLU_037990_0_0_6"/>
<dbReference type="UniPathway" id="UPA00079">
    <property type="reaction ID" value="UER00169"/>
</dbReference>
<dbReference type="UniPathway" id="UPA00232"/>
<dbReference type="GO" id="GO:0008425">
    <property type="term" value="F:2-methoxy-6-polyprenyl-1,4-benzoquinol methyltransferase activity"/>
    <property type="evidence" value="ECO:0007669"/>
    <property type="project" value="UniProtKB-UniRule"/>
</dbReference>
<dbReference type="GO" id="GO:0043770">
    <property type="term" value="F:demethylmenaquinone methyltransferase activity"/>
    <property type="evidence" value="ECO:0007669"/>
    <property type="project" value="UniProtKB-UniRule"/>
</dbReference>
<dbReference type="GO" id="GO:0009060">
    <property type="term" value="P:aerobic respiration"/>
    <property type="evidence" value="ECO:0007669"/>
    <property type="project" value="UniProtKB-UniRule"/>
</dbReference>
<dbReference type="GO" id="GO:0009234">
    <property type="term" value="P:menaquinone biosynthetic process"/>
    <property type="evidence" value="ECO:0007669"/>
    <property type="project" value="UniProtKB-UniRule"/>
</dbReference>
<dbReference type="GO" id="GO:0032259">
    <property type="term" value="P:methylation"/>
    <property type="evidence" value="ECO:0007669"/>
    <property type="project" value="UniProtKB-KW"/>
</dbReference>
<dbReference type="CDD" id="cd02440">
    <property type="entry name" value="AdoMet_MTases"/>
    <property type="match status" value="1"/>
</dbReference>
<dbReference type="Gene3D" id="3.40.50.150">
    <property type="entry name" value="Vaccinia Virus protein VP39"/>
    <property type="match status" value="1"/>
</dbReference>
<dbReference type="HAMAP" id="MF_01813">
    <property type="entry name" value="MenG_UbiE_methyltr"/>
    <property type="match status" value="1"/>
</dbReference>
<dbReference type="InterPro" id="IPR029063">
    <property type="entry name" value="SAM-dependent_MTases_sf"/>
</dbReference>
<dbReference type="InterPro" id="IPR004033">
    <property type="entry name" value="UbiE/COQ5_MeTrFase"/>
</dbReference>
<dbReference type="InterPro" id="IPR023576">
    <property type="entry name" value="UbiE/COQ5_MeTrFase_CS"/>
</dbReference>
<dbReference type="NCBIfam" id="TIGR01934">
    <property type="entry name" value="MenG_MenH_UbiE"/>
    <property type="match status" value="1"/>
</dbReference>
<dbReference type="NCBIfam" id="NF001240">
    <property type="entry name" value="PRK00216.1-1"/>
    <property type="match status" value="1"/>
</dbReference>
<dbReference type="NCBIfam" id="NF001244">
    <property type="entry name" value="PRK00216.1-5"/>
    <property type="match status" value="1"/>
</dbReference>
<dbReference type="PANTHER" id="PTHR43591:SF24">
    <property type="entry name" value="2-METHOXY-6-POLYPRENYL-1,4-BENZOQUINOL METHYLASE, MITOCHONDRIAL"/>
    <property type="match status" value="1"/>
</dbReference>
<dbReference type="PANTHER" id="PTHR43591">
    <property type="entry name" value="METHYLTRANSFERASE"/>
    <property type="match status" value="1"/>
</dbReference>
<dbReference type="Pfam" id="PF01209">
    <property type="entry name" value="Ubie_methyltran"/>
    <property type="match status" value="1"/>
</dbReference>
<dbReference type="SUPFAM" id="SSF53335">
    <property type="entry name" value="S-adenosyl-L-methionine-dependent methyltransferases"/>
    <property type="match status" value="1"/>
</dbReference>
<dbReference type="PROSITE" id="PS51608">
    <property type="entry name" value="SAM_MT_UBIE"/>
    <property type="match status" value="1"/>
</dbReference>
<dbReference type="PROSITE" id="PS01183">
    <property type="entry name" value="UBIE_1"/>
    <property type="match status" value="1"/>
</dbReference>
<dbReference type="PROSITE" id="PS01184">
    <property type="entry name" value="UBIE_2"/>
    <property type="match status" value="1"/>
</dbReference>
<organism>
    <name type="scientific">Legionella pneumophila (strain Corby)</name>
    <dbReference type="NCBI Taxonomy" id="400673"/>
    <lineage>
        <taxon>Bacteria</taxon>
        <taxon>Pseudomonadati</taxon>
        <taxon>Pseudomonadota</taxon>
        <taxon>Gammaproteobacteria</taxon>
        <taxon>Legionellales</taxon>
        <taxon>Legionellaceae</taxon>
        <taxon>Legionella</taxon>
    </lineage>
</organism>
<sequence>MANQKQTTHFGFKSVDWNEKEKKVAEVFHSVAKNYDRMNDLMSLGIHHLWKRYTIELSHVRPGQSVLDLAGGSGDLTRLLSQKVGNSGQVILADINAAMLHVGRDRLLDEGLFKNIRYVQGNAQCLPFADNSFHCITMGFGLRNVTDKDEALQSMYRVCKPGGKLMVLEFSTPVFPGLKPVYDWYSFNILPKIGKFVANDEASYQYLAESIRMHPDQETLKAMIERVGFEDCHYHNLSGGIVALHIAYKY</sequence>
<gene>
    <name evidence="1" type="primary">ubiE</name>
    <name type="ordered locus">LPC_3203</name>
</gene>
<protein>
    <recommendedName>
        <fullName evidence="1">Ubiquinone/menaquinone biosynthesis C-methyltransferase UbiE</fullName>
        <ecNumber evidence="1">2.1.1.163</ecNumber>
        <ecNumber evidence="1">2.1.1.201</ecNumber>
    </recommendedName>
    <alternativeName>
        <fullName evidence="1">2-methoxy-6-polyprenyl-1,4-benzoquinol methylase</fullName>
    </alternativeName>
    <alternativeName>
        <fullName evidence="1">Demethylmenaquinone methyltransferase</fullName>
    </alternativeName>
</protein>
<comment type="function">
    <text evidence="1">Methyltransferase required for the conversion of demethylmenaquinol (DMKH2) to menaquinol (MKH2) and the conversion of 2-polyprenyl-6-methoxy-1,4-benzoquinol (DDMQH2) to 2-polyprenyl-3-methyl-6-methoxy-1,4-benzoquinol (DMQH2).</text>
</comment>
<comment type="catalytic activity">
    <reaction evidence="1">
        <text>a 2-demethylmenaquinol + S-adenosyl-L-methionine = a menaquinol + S-adenosyl-L-homocysteine + H(+)</text>
        <dbReference type="Rhea" id="RHEA:42640"/>
        <dbReference type="Rhea" id="RHEA-COMP:9539"/>
        <dbReference type="Rhea" id="RHEA-COMP:9563"/>
        <dbReference type="ChEBI" id="CHEBI:15378"/>
        <dbReference type="ChEBI" id="CHEBI:18151"/>
        <dbReference type="ChEBI" id="CHEBI:55437"/>
        <dbReference type="ChEBI" id="CHEBI:57856"/>
        <dbReference type="ChEBI" id="CHEBI:59789"/>
        <dbReference type="EC" id="2.1.1.163"/>
    </reaction>
</comment>
<comment type="catalytic activity">
    <reaction evidence="1">
        <text>a 2-methoxy-6-(all-trans-polyprenyl)benzene-1,4-diol + S-adenosyl-L-methionine = a 5-methoxy-2-methyl-3-(all-trans-polyprenyl)benzene-1,4-diol + S-adenosyl-L-homocysteine + H(+)</text>
        <dbReference type="Rhea" id="RHEA:28286"/>
        <dbReference type="Rhea" id="RHEA-COMP:10858"/>
        <dbReference type="Rhea" id="RHEA-COMP:10859"/>
        <dbReference type="ChEBI" id="CHEBI:15378"/>
        <dbReference type="ChEBI" id="CHEBI:57856"/>
        <dbReference type="ChEBI" id="CHEBI:59789"/>
        <dbReference type="ChEBI" id="CHEBI:84166"/>
        <dbReference type="ChEBI" id="CHEBI:84167"/>
        <dbReference type="EC" id="2.1.1.201"/>
    </reaction>
</comment>
<comment type="pathway">
    <text evidence="1">Quinol/quinone metabolism; menaquinone biosynthesis; menaquinol from 1,4-dihydroxy-2-naphthoate: step 2/2.</text>
</comment>
<comment type="pathway">
    <text evidence="1">Cofactor biosynthesis; ubiquinone biosynthesis.</text>
</comment>
<comment type="similarity">
    <text evidence="1">Belongs to the class I-like SAM-binding methyltransferase superfamily. MenG/UbiE family.</text>
</comment>
<proteinExistence type="inferred from homology"/>
<reference key="1">
    <citation type="submission" date="2006-11" db="EMBL/GenBank/DDBJ databases">
        <title>Identification and characterization of a new conjugation/ type IVA secretion system (trb/tra) of L. pneumophila Corby localized on a mobile genomic island.</title>
        <authorList>
            <person name="Gloeckner G."/>
            <person name="Albert-Weissenberger C."/>
            <person name="Weinmann E."/>
            <person name="Jacobi S."/>
            <person name="Schunder E."/>
            <person name="Steinert M."/>
            <person name="Buchrieser C."/>
            <person name="Hacker J."/>
            <person name="Heuner K."/>
        </authorList>
    </citation>
    <scope>NUCLEOTIDE SEQUENCE [LARGE SCALE GENOMIC DNA]</scope>
    <source>
        <strain>Corby</strain>
    </source>
</reference>
<name>UBIE_LEGPC</name>
<feature type="chain" id="PRO_1000056255" description="Ubiquinone/menaquinone biosynthesis C-methyltransferase UbiE">
    <location>
        <begin position="1"/>
        <end position="250"/>
    </location>
</feature>
<feature type="binding site" evidence="1">
    <location>
        <position position="73"/>
    </location>
    <ligand>
        <name>S-adenosyl-L-methionine</name>
        <dbReference type="ChEBI" id="CHEBI:59789"/>
    </ligand>
</feature>
<feature type="binding site" evidence="1">
    <location>
        <position position="94"/>
    </location>
    <ligand>
        <name>S-adenosyl-L-methionine</name>
        <dbReference type="ChEBI" id="CHEBI:59789"/>
    </ligand>
</feature>
<feature type="binding site" evidence="1">
    <location>
        <begin position="122"/>
        <end position="123"/>
    </location>
    <ligand>
        <name>S-adenosyl-L-methionine</name>
        <dbReference type="ChEBI" id="CHEBI:59789"/>
    </ligand>
</feature>
<accession>A5II90</accession>
<keyword id="KW-0474">Menaquinone biosynthesis</keyword>
<keyword id="KW-0489">Methyltransferase</keyword>
<keyword id="KW-0949">S-adenosyl-L-methionine</keyword>
<keyword id="KW-0808">Transferase</keyword>
<keyword id="KW-0831">Ubiquinone biosynthesis</keyword>
<evidence type="ECO:0000255" key="1">
    <source>
        <dbReference type="HAMAP-Rule" id="MF_01813"/>
    </source>
</evidence>